<keyword id="KW-0998">Cell outer membrane</keyword>
<keyword id="KW-0134">Cell wall</keyword>
<keyword id="KW-1015">Disulfide bond</keyword>
<keyword id="KW-0406">Ion transport</keyword>
<keyword id="KW-0472">Membrane</keyword>
<keyword id="KW-0479">Metal-binding</keyword>
<keyword id="KW-1185">Reference proteome</keyword>
<keyword id="KW-0964">Secreted</keyword>
<keyword id="KW-0812">Transmembrane</keyword>
<keyword id="KW-1133">Transmembrane helix</keyword>
<keyword id="KW-0813">Transport</keyword>
<keyword id="KW-0862">Zinc</keyword>
<dbReference type="EMBL" id="AE000516">
    <property type="protein sequence ID" value="AAK45169.1"/>
    <property type="molecule type" value="Genomic_DNA"/>
</dbReference>
<dbReference type="PIR" id="H70782">
    <property type="entry name" value="H70782"/>
</dbReference>
<dbReference type="RefSeq" id="WP_003404684.1">
    <property type="nucleotide sequence ID" value="NZ_KK341227.1"/>
</dbReference>
<dbReference type="BMRB" id="P9WIU4"/>
<dbReference type="SMR" id="P9WIU4"/>
<dbReference type="KEGG" id="mtc:MT0922"/>
<dbReference type="PATRIC" id="fig|83331.31.peg.991"/>
<dbReference type="HOGENOM" id="CLU_836308_0_0_11"/>
<dbReference type="Proteomes" id="UP000001020">
    <property type="component" value="Chromosome"/>
</dbReference>
<dbReference type="GO" id="GO:0009279">
    <property type="term" value="C:cell outer membrane"/>
    <property type="evidence" value="ECO:0007669"/>
    <property type="project" value="UniProtKB-SubCell"/>
</dbReference>
<dbReference type="GO" id="GO:0005576">
    <property type="term" value="C:extracellular region"/>
    <property type="evidence" value="ECO:0007669"/>
    <property type="project" value="UniProtKB-KW"/>
</dbReference>
<dbReference type="GO" id="GO:0046872">
    <property type="term" value="F:metal ion binding"/>
    <property type="evidence" value="ECO:0007669"/>
    <property type="project" value="UniProtKB-KW"/>
</dbReference>
<dbReference type="GO" id="GO:0006811">
    <property type="term" value="P:monoatomic ion transport"/>
    <property type="evidence" value="ECO:0007669"/>
    <property type="project" value="UniProtKB-KW"/>
</dbReference>
<dbReference type="CDD" id="cd07185">
    <property type="entry name" value="OmpA_C-like"/>
    <property type="match status" value="1"/>
</dbReference>
<dbReference type="Gene3D" id="3.40.1520.20">
    <property type="match status" value="1"/>
</dbReference>
<dbReference type="Gene3D" id="3.30.1330.60">
    <property type="entry name" value="OmpA-like domain"/>
    <property type="match status" value="1"/>
</dbReference>
<dbReference type="InterPro" id="IPR054121">
    <property type="entry name" value="ArfA_BON-like"/>
</dbReference>
<dbReference type="InterPro" id="IPR050330">
    <property type="entry name" value="Bact_OuterMem_StrucFunc"/>
</dbReference>
<dbReference type="InterPro" id="IPR007055">
    <property type="entry name" value="BON_dom"/>
</dbReference>
<dbReference type="InterPro" id="IPR006664">
    <property type="entry name" value="OMP_bac"/>
</dbReference>
<dbReference type="InterPro" id="IPR006665">
    <property type="entry name" value="OmpA-like"/>
</dbReference>
<dbReference type="InterPro" id="IPR006690">
    <property type="entry name" value="OMPA-like_CS"/>
</dbReference>
<dbReference type="InterPro" id="IPR036737">
    <property type="entry name" value="OmpA-like_sf"/>
</dbReference>
<dbReference type="PANTHER" id="PTHR30329:SF21">
    <property type="entry name" value="LIPOPROTEIN YIAD-RELATED"/>
    <property type="match status" value="1"/>
</dbReference>
<dbReference type="PANTHER" id="PTHR30329">
    <property type="entry name" value="STATOR ELEMENT OF FLAGELLAR MOTOR COMPLEX"/>
    <property type="match status" value="1"/>
</dbReference>
<dbReference type="Pfam" id="PF04972">
    <property type="entry name" value="BON"/>
    <property type="match status" value="1"/>
</dbReference>
<dbReference type="Pfam" id="PF21923">
    <property type="entry name" value="BON_like"/>
    <property type="match status" value="1"/>
</dbReference>
<dbReference type="Pfam" id="PF00691">
    <property type="entry name" value="OmpA"/>
    <property type="match status" value="1"/>
</dbReference>
<dbReference type="PRINTS" id="PR01023">
    <property type="entry name" value="NAFLGMOTY"/>
</dbReference>
<dbReference type="PRINTS" id="PR01021">
    <property type="entry name" value="OMPADOMAIN"/>
</dbReference>
<dbReference type="SUPFAM" id="SSF103088">
    <property type="entry name" value="OmpA-like"/>
    <property type="match status" value="1"/>
</dbReference>
<dbReference type="PROSITE" id="PS01068">
    <property type="entry name" value="OMPA_1"/>
    <property type="match status" value="1"/>
</dbReference>
<dbReference type="PROSITE" id="PS51123">
    <property type="entry name" value="OMPA_2"/>
    <property type="match status" value="1"/>
</dbReference>
<proteinExistence type="inferred from homology"/>
<gene>
    <name type="primary">arfA</name>
    <name type="synonym">ompA</name>
    <name type="ordered locus">MT0922</name>
</gene>
<name>ARFA_MYCTO</name>
<sequence length="326" mass="33574">MASKAGLGQTPATTDARRTQKFYRGSPGRPWLIGAVVIPLLIAAIGYGAFERPQSVTGPTGVLPTLTPTSTRGASALSLSLLSISRSGNTVTLIGDFPDEAAKAALMTALNGLLAPGVNVIDQIHVDPVVRSLDFSSAEPVFTASVPIPDFGLKVERDTVTLTGTAPSSEHKDAVKRAATSTWPDMKIVNNIEVTGQAPPGPPASGPCADLQSAINAVTGGPIAFGNDGASLIPADYEILNRVADKLKACPDARVTINGYTDNTGSEGINIPLSAQRAKIVADYLVARGVAGDHIATVGLGSVNPIASNATPEGRAKNRRVEIVVN</sequence>
<comment type="function">
    <text evidence="1">Probably plays a role in ammonia secretion that neutralizes the medium at pH 5.5, although it does not play a direct role in ammonia transport.</text>
</comment>
<comment type="cofactor">
    <cofactor evidence="1">
        <name>Zn(2+)</name>
        <dbReference type="ChEBI" id="CHEBI:29105"/>
    </cofactor>
    <text evidence="1">May bind Zn(2+) via residues in the BON domain.</text>
</comment>
<comment type="subcellular location">
    <subcellularLocation>
        <location evidence="1">Secreted</location>
        <location evidence="1">Cell wall</location>
    </subcellularLocation>
    <subcellularLocation>
        <location evidence="1">Cell outer membrane</location>
    </subcellularLocation>
    <text>Does not have a cleavable signal sequence.</text>
</comment>
<comment type="similarity">
    <text evidence="5">Belongs to the outer membrane OOP (TC 1.B.6) superfamily. ArfA family.</text>
</comment>
<evidence type="ECO:0000250" key="1"/>
<evidence type="ECO:0000255" key="2"/>
<evidence type="ECO:0000255" key="3">
    <source>
        <dbReference type="PROSITE-ProRule" id="PRU00473"/>
    </source>
</evidence>
<evidence type="ECO:0000256" key="4">
    <source>
        <dbReference type="SAM" id="MobiDB-lite"/>
    </source>
</evidence>
<evidence type="ECO:0000305" key="5"/>
<accession>P9WIU4</accession>
<accession>L0T818</accession>
<accession>P65593</accession>
<accession>Q10557</accession>
<organism>
    <name type="scientific">Mycobacterium tuberculosis (strain CDC 1551 / Oshkosh)</name>
    <dbReference type="NCBI Taxonomy" id="83331"/>
    <lineage>
        <taxon>Bacteria</taxon>
        <taxon>Bacillati</taxon>
        <taxon>Actinomycetota</taxon>
        <taxon>Actinomycetes</taxon>
        <taxon>Mycobacteriales</taxon>
        <taxon>Mycobacteriaceae</taxon>
        <taxon>Mycobacterium</taxon>
        <taxon>Mycobacterium tuberculosis complex</taxon>
    </lineage>
</organism>
<feature type="chain" id="PRO_0000427944" description="Peptidoglycan-binding protein ArfA">
    <location>
        <begin position="1"/>
        <end position="326"/>
    </location>
</feature>
<feature type="transmembrane region" description="Helical" evidence="2">
    <location>
        <begin position="30"/>
        <end position="50"/>
    </location>
</feature>
<feature type="domain" description="BON">
    <location>
        <begin position="127"/>
        <end position="196"/>
    </location>
</feature>
<feature type="domain" description="OmpA-like" evidence="3">
    <location>
        <begin position="212"/>
        <end position="326"/>
    </location>
</feature>
<feature type="region of interest" description="Required for protein translocation to the outer membrane" evidence="1">
    <location>
        <begin position="1"/>
        <end position="73"/>
    </location>
</feature>
<feature type="region of interest" description="Disordered" evidence="4">
    <location>
        <begin position="1"/>
        <end position="21"/>
    </location>
</feature>
<feature type="disulfide bond" evidence="1">
    <location>
        <begin position="208"/>
        <end position="250"/>
    </location>
</feature>
<reference key="1">
    <citation type="journal article" date="2002" name="J. Bacteriol.">
        <title>Whole-genome comparison of Mycobacterium tuberculosis clinical and laboratory strains.</title>
        <authorList>
            <person name="Fleischmann R.D."/>
            <person name="Alland D."/>
            <person name="Eisen J.A."/>
            <person name="Carpenter L."/>
            <person name="White O."/>
            <person name="Peterson J.D."/>
            <person name="DeBoy R.T."/>
            <person name="Dodson R.J."/>
            <person name="Gwinn M.L."/>
            <person name="Haft D.H."/>
            <person name="Hickey E.K."/>
            <person name="Kolonay J.F."/>
            <person name="Nelson W.C."/>
            <person name="Umayam L.A."/>
            <person name="Ermolaeva M.D."/>
            <person name="Salzberg S.L."/>
            <person name="Delcher A."/>
            <person name="Utterback T.R."/>
            <person name="Weidman J.F."/>
            <person name="Khouri H.M."/>
            <person name="Gill J."/>
            <person name="Mikula A."/>
            <person name="Bishai W."/>
            <person name="Jacobs W.R. Jr."/>
            <person name="Venter J.C."/>
            <person name="Fraser C.M."/>
        </authorList>
    </citation>
    <scope>NUCLEOTIDE SEQUENCE [LARGE SCALE GENOMIC DNA]</scope>
    <source>
        <strain>CDC 1551 / Oshkosh</strain>
    </source>
</reference>
<protein>
    <recommendedName>
        <fullName>Peptidoglycan-binding protein ArfA</fullName>
    </recommendedName>
    <alternativeName>
        <fullName>Outer membrane porin A</fullName>
    </alternativeName>
    <alternativeName>
        <fullName>Outer membrane protein A</fullName>
        <shortName>OmpATb</shortName>
    </alternativeName>
    <alternativeName>
        <fullName>Outer membrane protein ArfA</fullName>
    </alternativeName>
</protein>